<accession>A5WG39</accession>
<protein>
    <recommendedName>
        <fullName evidence="1">NADH-quinone oxidoreductase subunit K</fullName>
        <ecNumber evidence="1">7.1.1.-</ecNumber>
    </recommendedName>
    <alternativeName>
        <fullName evidence="1">NADH dehydrogenase I subunit K</fullName>
    </alternativeName>
    <alternativeName>
        <fullName evidence="1">NDH-1 subunit K</fullName>
    </alternativeName>
</protein>
<keyword id="KW-0997">Cell inner membrane</keyword>
<keyword id="KW-1003">Cell membrane</keyword>
<keyword id="KW-0472">Membrane</keyword>
<keyword id="KW-0520">NAD</keyword>
<keyword id="KW-0874">Quinone</keyword>
<keyword id="KW-1278">Translocase</keyword>
<keyword id="KW-0812">Transmembrane</keyword>
<keyword id="KW-1133">Transmembrane helix</keyword>
<keyword id="KW-0813">Transport</keyword>
<keyword id="KW-0830">Ubiquinone</keyword>
<proteinExistence type="inferred from homology"/>
<organism>
    <name type="scientific">Psychrobacter sp. (strain PRwf-1)</name>
    <dbReference type="NCBI Taxonomy" id="349106"/>
    <lineage>
        <taxon>Bacteria</taxon>
        <taxon>Pseudomonadati</taxon>
        <taxon>Pseudomonadota</taxon>
        <taxon>Gammaproteobacteria</taxon>
        <taxon>Moraxellales</taxon>
        <taxon>Moraxellaceae</taxon>
        <taxon>Psychrobacter</taxon>
    </lineage>
</organism>
<reference key="1">
    <citation type="submission" date="2007-05" db="EMBL/GenBank/DDBJ databases">
        <title>Complete sequence of chromosome of Psychrobacter sp. PRwf-1.</title>
        <authorList>
            <consortium name="US DOE Joint Genome Institute"/>
            <person name="Copeland A."/>
            <person name="Lucas S."/>
            <person name="Lapidus A."/>
            <person name="Barry K."/>
            <person name="Detter J.C."/>
            <person name="Glavina del Rio T."/>
            <person name="Hammon N."/>
            <person name="Israni S."/>
            <person name="Dalin E."/>
            <person name="Tice H."/>
            <person name="Pitluck S."/>
            <person name="Chain P."/>
            <person name="Malfatti S."/>
            <person name="Shin M."/>
            <person name="Vergez L."/>
            <person name="Schmutz J."/>
            <person name="Larimer F."/>
            <person name="Land M."/>
            <person name="Hauser L."/>
            <person name="Kyrpides N."/>
            <person name="Kim E."/>
            <person name="Tiedje J."/>
            <person name="Richardson P."/>
        </authorList>
    </citation>
    <scope>NUCLEOTIDE SEQUENCE [LARGE SCALE GENOMIC DNA]</scope>
    <source>
        <strain>PRwf-1</strain>
    </source>
</reference>
<feature type="chain" id="PRO_0000390180" description="NADH-quinone oxidoreductase subunit K">
    <location>
        <begin position="1"/>
        <end position="124"/>
    </location>
</feature>
<feature type="transmembrane region" description="Helical" evidence="1">
    <location>
        <begin position="28"/>
        <end position="48"/>
    </location>
</feature>
<feature type="transmembrane region" description="Helical" evidence="1">
    <location>
        <begin position="52"/>
        <end position="72"/>
    </location>
</feature>
<feature type="transmembrane region" description="Helical" evidence="1">
    <location>
        <begin position="84"/>
        <end position="104"/>
    </location>
</feature>
<dbReference type="EC" id="7.1.1.-" evidence="1"/>
<dbReference type="EMBL" id="CP000713">
    <property type="protein sequence ID" value="ABQ94630.1"/>
    <property type="molecule type" value="Genomic_DNA"/>
</dbReference>
<dbReference type="SMR" id="A5WG39"/>
<dbReference type="STRING" id="349106.PsycPRwf_1690"/>
<dbReference type="KEGG" id="prw:PsycPRwf_1690"/>
<dbReference type="eggNOG" id="COG0713">
    <property type="taxonomic scope" value="Bacteria"/>
</dbReference>
<dbReference type="HOGENOM" id="CLU_144724_0_1_6"/>
<dbReference type="GO" id="GO:0030964">
    <property type="term" value="C:NADH dehydrogenase complex"/>
    <property type="evidence" value="ECO:0007669"/>
    <property type="project" value="TreeGrafter"/>
</dbReference>
<dbReference type="GO" id="GO:0005886">
    <property type="term" value="C:plasma membrane"/>
    <property type="evidence" value="ECO:0007669"/>
    <property type="project" value="UniProtKB-SubCell"/>
</dbReference>
<dbReference type="GO" id="GO:0050136">
    <property type="term" value="F:NADH:ubiquinone reductase (non-electrogenic) activity"/>
    <property type="evidence" value="ECO:0007669"/>
    <property type="project" value="UniProtKB-UniRule"/>
</dbReference>
<dbReference type="GO" id="GO:0048038">
    <property type="term" value="F:quinone binding"/>
    <property type="evidence" value="ECO:0007669"/>
    <property type="project" value="UniProtKB-KW"/>
</dbReference>
<dbReference type="GO" id="GO:0042773">
    <property type="term" value="P:ATP synthesis coupled electron transport"/>
    <property type="evidence" value="ECO:0007669"/>
    <property type="project" value="InterPro"/>
</dbReference>
<dbReference type="FunFam" id="1.10.287.3510:FF:000001">
    <property type="entry name" value="NADH-quinone oxidoreductase subunit K"/>
    <property type="match status" value="1"/>
</dbReference>
<dbReference type="Gene3D" id="1.10.287.3510">
    <property type="match status" value="1"/>
</dbReference>
<dbReference type="HAMAP" id="MF_01456">
    <property type="entry name" value="NDH1_NuoK"/>
    <property type="match status" value="1"/>
</dbReference>
<dbReference type="InterPro" id="IPR001133">
    <property type="entry name" value="NADH_UbQ_OxRdtase_chain4L/K"/>
</dbReference>
<dbReference type="InterPro" id="IPR039428">
    <property type="entry name" value="NUOK/Mnh_C1-like"/>
</dbReference>
<dbReference type="NCBIfam" id="NF004319">
    <property type="entry name" value="PRK05715.1-1"/>
    <property type="match status" value="1"/>
</dbReference>
<dbReference type="NCBIfam" id="NF004320">
    <property type="entry name" value="PRK05715.1-2"/>
    <property type="match status" value="1"/>
</dbReference>
<dbReference type="PANTHER" id="PTHR11434:SF16">
    <property type="entry name" value="NADH-UBIQUINONE OXIDOREDUCTASE CHAIN 4L"/>
    <property type="match status" value="1"/>
</dbReference>
<dbReference type="PANTHER" id="PTHR11434">
    <property type="entry name" value="NADH-UBIQUINONE OXIDOREDUCTASE SUBUNIT ND4L"/>
    <property type="match status" value="1"/>
</dbReference>
<dbReference type="Pfam" id="PF00420">
    <property type="entry name" value="Oxidored_q2"/>
    <property type="match status" value="1"/>
</dbReference>
<name>NUOK_PSYWF</name>
<sequence>MHLKPVETVQDTPTFATADPTILGPIPMEHGLILAAIIFAIGLCGVMVRRNFLFMLMSLEIMMSAAGLAFIVAGSHWLSADGQIMFIFILTLAAAEASLGLAILLQFYHRRGHLDVDSANEMRG</sequence>
<comment type="function">
    <text evidence="1">NDH-1 shuttles electrons from NADH, via FMN and iron-sulfur (Fe-S) centers, to quinones in the respiratory chain. The immediate electron acceptor for the enzyme in this species is believed to be ubiquinone. Couples the redox reaction to proton translocation (for every two electrons transferred, four hydrogen ions are translocated across the cytoplasmic membrane), and thus conserves the redox energy in a proton gradient.</text>
</comment>
<comment type="catalytic activity">
    <reaction evidence="1">
        <text>a quinone + NADH + 5 H(+)(in) = a quinol + NAD(+) + 4 H(+)(out)</text>
        <dbReference type="Rhea" id="RHEA:57888"/>
        <dbReference type="ChEBI" id="CHEBI:15378"/>
        <dbReference type="ChEBI" id="CHEBI:24646"/>
        <dbReference type="ChEBI" id="CHEBI:57540"/>
        <dbReference type="ChEBI" id="CHEBI:57945"/>
        <dbReference type="ChEBI" id="CHEBI:132124"/>
    </reaction>
</comment>
<comment type="subunit">
    <text evidence="1">NDH-1 is composed of 14 different subunits. Subunits NuoA, H, J, K, L, M, N constitute the membrane sector of the complex.</text>
</comment>
<comment type="subcellular location">
    <subcellularLocation>
        <location evidence="1">Cell inner membrane</location>
        <topology evidence="1">Multi-pass membrane protein</topology>
    </subcellularLocation>
</comment>
<comment type="similarity">
    <text evidence="1">Belongs to the complex I subunit 4L family.</text>
</comment>
<evidence type="ECO:0000255" key="1">
    <source>
        <dbReference type="HAMAP-Rule" id="MF_01456"/>
    </source>
</evidence>
<gene>
    <name evidence="1" type="primary">nuoK</name>
    <name type="ordered locus">PsycPRwf_1690</name>
</gene>